<gene>
    <name type="ordered locus">ECU06_0790</name>
</gene>
<dbReference type="EC" id="6.1.1.12"/>
<dbReference type="EMBL" id="AL590446">
    <property type="protein sequence ID" value="CAD25439.1"/>
    <property type="molecule type" value="Genomic_DNA"/>
</dbReference>
<dbReference type="RefSeq" id="NP_585835.1">
    <property type="nucleotide sequence ID" value="NM_001041457.1"/>
</dbReference>
<dbReference type="SMR" id="Q8SRQ8"/>
<dbReference type="FunCoup" id="Q8SRQ8">
    <property type="interactions" value="290"/>
</dbReference>
<dbReference type="STRING" id="284813.Q8SRQ8"/>
<dbReference type="GeneID" id="859259"/>
<dbReference type="KEGG" id="ecu:ECU06_0790"/>
<dbReference type="VEuPathDB" id="MicrosporidiaDB:ECU06_0790"/>
<dbReference type="HOGENOM" id="CLU_004553_2_1_1"/>
<dbReference type="InParanoid" id="Q8SRQ8"/>
<dbReference type="OMA" id="WVHEIRD"/>
<dbReference type="OrthoDB" id="372395at2759"/>
<dbReference type="Proteomes" id="UP000000819">
    <property type="component" value="Chromosome VI"/>
</dbReference>
<dbReference type="GO" id="GO:0017101">
    <property type="term" value="C:aminoacyl-tRNA synthetase multienzyme complex"/>
    <property type="evidence" value="ECO:0007669"/>
    <property type="project" value="TreeGrafter"/>
</dbReference>
<dbReference type="GO" id="GO:0005829">
    <property type="term" value="C:cytosol"/>
    <property type="evidence" value="ECO:0007669"/>
    <property type="project" value="TreeGrafter"/>
</dbReference>
<dbReference type="GO" id="GO:0004815">
    <property type="term" value="F:aspartate-tRNA ligase activity"/>
    <property type="evidence" value="ECO:0007669"/>
    <property type="project" value="UniProtKB-EC"/>
</dbReference>
<dbReference type="GO" id="GO:0005524">
    <property type="term" value="F:ATP binding"/>
    <property type="evidence" value="ECO:0007669"/>
    <property type="project" value="UniProtKB-KW"/>
</dbReference>
<dbReference type="GO" id="GO:0003723">
    <property type="term" value="F:RNA binding"/>
    <property type="evidence" value="ECO:0007669"/>
    <property type="project" value="TreeGrafter"/>
</dbReference>
<dbReference type="GO" id="GO:0006422">
    <property type="term" value="P:aspartyl-tRNA aminoacylation"/>
    <property type="evidence" value="ECO:0007669"/>
    <property type="project" value="InterPro"/>
</dbReference>
<dbReference type="CDD" id="cd00776">
    <property type="entry name" value="AsxRS_core"/>
    <property type="match status" value="1"/>
</dbReference>
<dbReference type="FunFam" id="3.30.930.10:FF:000038">
    <property type="entry name" value="Aspartate--tRNA ligase"/>
    <property type="match status" value="1"/>
</dbReference>
<dbReference type="Gene3D" id="3.30.930.10">
    <property type="entry name" value="Bira Bifunctional Protein, Domain 2"/>
    <property type="match status" value="1"/>
</dbReference>
<dbReference type="Gene3D" id="2.40.50.140">
    <property type="entry name" value="Nucleic acid-binding proteins"/>
    <property type="match status" value="1"/>
</dbReference>
<dbReference type="HAMAP" id="MF_02075">
    <property type="entry name" value="Asp_tRNA_synth_type2"/>
    <property type="match status" value="1"/>
</dbReference>
<dbReference type="InterPro" id="IPR004364">
    <property type="entry name" value="Aa-tRNA-synt_II"/>
</dbReference>
<dbReference type="InterPro" id="IPR006195">
    <property type="entry name" value="aa-tRNA-synth_II"/>
</dbReference>
<dbReference type="InterPro" id="IPR045864">
    <property type="entry name" value="aa-tRNA-synth_II/BPL/LPL"/>
</dbReference>
<dbReference type="InterPro" id="IPR004523">
    <property type="entry name" value="Asp-tRNA_synthase_2"/>
</dbReference>
<dbReference type="InterPro" id="IPR002312">
    <property type="entry name" value="Asp/Asn-tRNA-synth_IIb"/>
</dbReference>
<dbReference type="InterPro" id="IPR012340">
    <property type="entry name" value="NA-bd_OB-fold"/>
</dbReference>
<dbReference type="InterPro" id="IPR004365">
    <property type="entry name" value="NA-bd_OB_tRNA"/>
</dbReference>
<dbReference type="NCBIfam" id="TIGR00458">
    <property type="entry name" value="aspS_nondisc"/>
    <property type="match status" value="1"/>
</dbReference>
<dbReference type="NCBIfam" id="NF003483">
    <property type="entry name" value="PRK05159.1"/>
    <property type="match status" value="1"/>
</dbReference>
<dbReference type="PANTHER" id="PTHR43450:SF1">
    <property type="entry name" value="ASPARTATE--TRNA LIGASE, CYTOPLASMIC"/>
    <property type="match status" value="1"/>
</dbReference>
<dbReference type="PANTHER" id="PTHR43450">
    <property type="entry name" value="ASPARTYL-TRNA SYNTHETASE"/>
    <property type="match status" value="1"/>
</dbReference>
<dbReference type="Pfam" id="PF00152">
    <property type="entry name" value="tRNA-synt_2"/>
    <property type="match status" value="1"/>
</dbReference>
<dbReference type="Pfam" id="PF01336">
    <property type="entry name" value="tRNA_anti-codon"/>
    <property type="match status" value="1"/>
</dbReference>
<dbReference type="PRINTS" id="PR01042">
    <property type="entry name" value="TRNASYNTHASP"/>
</dbReference>
<dbReference type="SUPFAM" id="SSF55681">
    <property type="entry name" value="Class II aaRS and biotin synthetases"/>
    <property type="match status" value="1"/>
</dbReference>
<dbReference type="SUPFAM" id="SSF50249">
    <property type="entry name" value="Nucleic acid-binding proteins"/>
    <property type="match status" value="1"/>
</dbReference>
<dbReference type="PROSITE" id="PS50862">
    <property type="entry name" value="AA_TRNA_LIGASE_II"/>
    <property type="match status" value="1"/>
</dbReference>
<sequence length="473" mass="54062">MEERLSKISVDGMREIRDLDGSLDGRCVSVRGFVFKSSCTGKYIFIVLRDGGCTVQCMCEKPTDGSGGLTMPEFSSLRKVTHESYIEIRGRVVKQGMEISGCSKKDIEVRILGFRVLSIADKSLPFAMKDVSATAEEREKNPTLQNVAYHIRLDNRAMDLRAPQTRATFRVVDGVMFFFRTYLRQNGFMEIKTSKLIGSSSEGGANLFSVDYFKRKAFMAQSPQLYKQMAIVGGFKRVYEIGHVYRAEESNINRYLSEFVGLDMEMEICTDYNDVIRFIHSMLVSIFDNLKKEYGEELETIRAFHAFEDLKYRRDPVVLTHRECVDLLLNEGVEMGYEDDFNSESEKKLGSVVRRMHGVDIFVIKDYPISTRPFYTYRDEEKGITRSYDFILRGQEILSGAQRVSIYKDLVKYVEEHGISPSSLGGYLESFKYGAPPHGGCGIGLERLMKAYFGMGDIRCFSLFPRDPNRLYP</sequence>
<protein>
    <recommendedName>
        <fullName>Probable aspartate--tRNA ligase, cytoplasmic</fullName>
        <ecNumber>6.1.1.12</ecNumber>
    </recommendedName>
    <alternativeName>
        <fullName>Aspartyl-tRNA synthetase</fullName>
        <shortName>AspRS</shortName>
    </alternativeName>
</protein>
<feature type="chain" id="PRO_0000388405" description="Probable aspartate--tRNA ligase, cytoplasmic">
    <location>
        <begin position="1"/>
        <end position="473"/>
    </location>
</feature>
<feature type="region of interest" description="Aspartate" evidence="1">
    <location>
        <begin position="224"/>
        <end position="227"/>
    </location>
</feature>
<feature type="binding site" evidence="1">
    <location>
        <position position="202"/>
    </location>
    <ligand>
        <name>L-aspartate</name>
        <dbReference type="ChEBI" id="CHEBI:29991"/>
    </ligand>
</feature>
<feature type="binding site" evidence="1">
    <location>
        <begin position="246"/>
        <end position="248"/>
    </location>
    <ligand>
        <name>ATP</name>
        <dbReference type="ChEBI" id="CHEBI:30616"/>
    </ligand>
</feature>
<feature type="binding site" evidence="1">
    <location>
        <position position="246"/>
    </location>
    <ligand>
        <name>L-aspartate</name>
        <dbReference type="ChEBI" id="CHEBI:29991"/>
    </ligand>
</feature>
<feature type="binding site" evidence="1">
    <location>
        <begin position="254"/>
        <end position="256"/>
    </location>
    <ligand>
        <name>ATP</name>
        <dbReference type="ChEBI" id="CHEBI:30616"/>
    </ligand>
</feature>
<feature type="binding site" evidence="1">
    <location>
        <position position="396"/>
    </location>
    <ligand>
        <name>ATP</name>
        <dbReference type="ChEBI" id="CHEBI:30616"/>
    </ligand>
</feature>
<feature type="binding site" evidence="1">
    <location>
        <position position="399"/>
    </location>
    <ligand>
        <name>L-aspartate</name>
        <dbReference type="ChEBI" id="CHEBI:29991"/>
    </ligand>
</feature>
<feature type="binding site" evidence="1">
    <location>
        <position position="403"/>
    </location>
    <ligand>
        <name>L-aspartate</name>
        <dbReference type="ChEBI" id="CHEBI:29991"/>
    </ligand>
</feature>
<feature type="binding site" evidence="1">
    <location>
        <begin position="444"/>
        <end position="447"/>
    </location>
    <ligand>
        <name>ATP</name>
        <dbReference type="ChEBI" id="CHEBI:30616"/>
    </ligand>
</feature>
<comment type="catalytic activity">
    <reaction>
        <text>tRNA(Asp) + L-aspartate + ATP = L-aspartyl-tRNA(Asp) + AMP + diphosphate</text>
        <dbReference type="Rhea" id="RHEA:19649"/>
        <dbReference type="Rhea" id="RHEA-COMP:9660"/>
        <dbReference type="Rhea" id="RHEA-COMP:9678"/>
        <dbReference type="ChEBI" id="CHEBI:29991"/>
        <dbReference type="ChEBI" id="CHEBI:30616"/>
        <dbReference type="ChEBI" id="CHEBI:33019"/>
        <dbReference type="ChEBI" id="CHEBI:78442"/>
        <dbReference type="ChEBI" id="CHEBI:78516"/>
        <dbReference type="ChEBI" id="CHEBI:456215"/>
        <dbReference type="EC" id="6.1.1.12"/>
    </reaction>
</comment>
<comment type="subunit">
    <text evidence="1">Homodimer.</text>
</comment>
<comment type="subcellular location">
    <subcellularLocation>
        <location evidence="1">Cytoplasm</location>
    </subcellularLocation>
</comment>
<comment type="similarity">
    <text evidence="2">Belongs to the class-II aminoacyl-tRNA synthetase family. Type 2 subfamily.</text>
</comment>
<name>SYDC_ENCCU</name>
<reference key="1">
    <citation type="journal article" date="2001" name="Nature">
        <title>Genome sequence and gene compaction of the eukaryote parasite Encephalitozoon cuniculi.</title>
        <authorList>
            <person name="Katinka M.D."/>
            <person name="Duprat S."/>
            <person name="Cornillot E."/>
            <person name="Metenier G."/>
            <person name="Thomarat F."/>
            <person name="Prensier G."/>
            <person name="Barbe V."/>
            <person name="Peyretaillade E."/>
            <person name="Brottier P."/>
            <person name="Wincker P."/>
            <person name="Delbac F."/>
            <person name="El Alaoui H."/>
            <person name="Peyret P."/>
            <person name="Saurin W."/>
            <person name="Gouy M."/>
            <person name="Weissenbach J."/>
            <person name="Vivares C.P."/>
        </authorList>
    </citation>
    <scope>NUCLEOTIDE SEQUENCE [LARGE SCALE GENOMIC DNA]</scope>
    <source>
        <strain>GB-M1</strain>
    </source>
</reference>
<proteinExistence type="inferred from homology"/>
<organism>
    <name type="scientific">Encephalitozoon cuniculi (strain GB-M1)</name>
    <name type="common">Microsporidian parasite</name>
    <dbReference type="NCBI Taxonomy" id="284813"/>
    <lineage>
        <taxon>Eukaryota</taxon>
        <taxon>Fungi</taxon>
        <taxon>Fungi incertae sedis</taxon>
        <taxon>Microsporidia</taxon>
        <taxon>Unikaryonidae</taxon>
        <taxon>Encephalitozoon</taxon>
    </lineage>
</organism>
<keyword id="KW-0030">Aminoacyl-tRNA synthetase</keyword>
<keyword id="KW-0067">ATP-binding</keyword>
<keyword id="KW-0963">Cytoplasm</keyword>
<keyword id="KW-0436">Ligase</keyword>
<keyword id="KW-0547">Nucleotide-binding</keyword>
<keyword id="KW-0648">Protein biosynthesis</keyword>
<keyword id="KW-1185">Reference proteome</keyword>
<evidence type="ECO:0000250" key="1"/>
<evidence type="ECO:0000305" key="2"/>
<accession>Q8SRQ8</accession>